<keyword id="KW-0963">Cytoplasm</keyword>
<keyword id="KW-0378">Hydrolase</keyword>
<keyword id="KW-1185">Reference proteome</keyword>
<comment type="catalytic activity">
    <reaction evidence="1">
        <text>urea + 2 H2O + H(+) = hydrogencarbonate + 2 NH4(+)</text>
        <dbReference type="Rhea" id="RHEA:20557"/>
        <dbReference type="ChEBI" id="CHEBI:15377"/>
        <dbReference type="ChEBI" id="CHEBI:15378"/>
        <dbReference type="ChEBI" id="CHEBI:16199"/>
        <dbReference type="ChEBI" id="CHEBI:17544"/>
        <dbReference type="ChEBI" id="CHEBI:28938"/>
        <dbReference type="EC" id="3.5.1.5"/>
    </reaction>
</comment>
<comment type="pathway">
    <text evidence="1">Nitrogen metabolism; urea degradation; CO(2) and NH(3) from urea (urease route): step 1/1.</text>
</comment>
<comment type="subunit">
    <text evidence="1">Heterotrimer of UreA (gamma), UreB (beta) and UreC (alpha) subunits. Three heterotrimers associate to form the active enzyme.</text>
</comment>
<comment type="subcellular location">
    <subcellularLocation>
        <location evidence="1">Cytoplasm</location>
    </subcellularLocation>
</comment>
<comment type="similarity">
    <text evidence="1">Belongs to the urease gamma subunit family.</text>
</comment>
<evidence type="ECO:0000255" key="1">
    <source>
        <dbReference type="HAMAP-Rule" id="MF_00739"/>
    </source>
</evidence>
<protein>
    <recommendedName>
        <fullName evidence="1">Urease subunit gamma</fullName>
        <ecNumber evidence="1">3.5.1.5</ecNumber>
    </recommendedName>
    <alternativeName>
        <fullName evidence="1">Urea amidohydrolase subunit gamma</fullName>
    </alternativeName>
</protein>
<sequence length="100" mass="11209">MHLTPREREKLLIVTAADLARRRQARGLKLNYPEAVAIITYEIIEGARDGRSVAELMSYGTTILQREQVMAGVAEMIPEVQVEATFPDGTKLVTVHHPIR</sequence>
<dbReference type="EC" id="3.5.1.5" evidence="1"/>
<dbReference type="EMBL" id="CP001032">
    <property type="protein sequence ID" value="ACB77497.1"/>
    <property type="molecule type" value="Genomic_DNA"/>
</dbReference>
<dbReference type="RefSeq" id="WP_012377025.1">
    <property type="nucleotide sequence ID" value="NC_010571.1"/>
</dbReference>
<dbReference type="SMR" id="B1ZP08"/>
<dbReference type="STRING" id="452637.Oter_4224"/>
<dbReference type="KEGG" id="ote:Oter_4224"/>
<dbReference type="eggNOG" id="COG0831">
    <property type="taxonomic scope" value="Bacteria"/>
</dbReference>
<dbReference type="HOGENOM" id="CLU_145825_1_0_0"/>
<dbReference type="OrthoDB" id="9793527at2"/>
<dbReference type="UniPathway" id="UPA00258">
    <property type="reaction ID" value="UER00370"/>
</dbReference>
<dbReference type="Proteomes" id="UP000007013">
    <property type="component" value="Chromosome"/>
</dbReference>
<dbReference type="GO" id="GO:0005737">
    <property type="term" value="C:cytoplasm"/>
    <property type="evidence" value="ECO:0007669"/>
    <property type="project" value="UniProtKB-SubCell"/>
</dbReference>
<dbReference type="GO" id="GO:0016151">
    <property type="term" value="F:nickel cation binding"/>
    <property type="evidence" value="ECO:0007669"/>
    <property type="project" value="InterPro"/>
</dbReference>
<dbReference type="GO" id="GO:0009039">
    <property type="term" value="F:urease activity"/>
    <property type="evidence" value="ECO:0007669"/>
    <property type="project" value="UniProtKB-UniRule"/>
</dbReference>
<dbReference type="GO" id="GO:0043419">
    <property type="term" value="P:urea catabolic process"/>
    <property type="evidence" value="ECO:0007669"/>
    <property type="project" value="UniProtKB-UniRule"/>
</dbReference>
<dbReference type="CDD" id="cd00390">
    <property type="entry name" value="Urease_gamma"/>
    <property type="match status" value="1"/>
</dbReference>
<dbReference type="Gene3D" id="3.30.280.10">
    <property type="entry name" value="Urease, gamma-like subunit"/>
    <property type="match status" value="1"/>
</dbReference>
<dbReference type="HAMAP" id="MF_00739">
    <property type="entry name" value="Urease_gamma"/>
    <property type="match status" value="1"/>
</dbReference>
<dbReference type="InterPro" id="IPR012010">
    <property type="entry name" value="Urease_gamma"/>
</dbReference>
<dbReference type="InterPro" id="IPR002026">
    <property type="entry name" value="Urease_gamma/gamma-beta_su"/>
</dbReference>
<dbReference type="InterPro" id="IPR036463">
    <property type="entry name" value="Urease_gamma_sf"/>
</dbReference>
<dbReference type="InterPro" id="IPR050069">
    <property type="entry name" value="Urease_subunit"/>
</dbReference>
<dbReference type="NCBIfam" id="NF009712">
    <property type="entry name" value="PRK13241.1"/>
    <property type="match status" value="1"/>
</dbReference>
<dbReference type="NCBIfam" id="TIGR00193">
    <property type="entry name" value="urease_gam"/>
    <property type="match status" value="1"/>
</dbReference>
<dbReference type="PANTHER" id="PTHR33569">
    <property type="entry name" value="UREASE"/>
    <property type="match status" value="1"/>
</dbReference>
<dbReference type="PANTHER" id="PTHR33569:SF1">
    <property type="entry name" value="UREASE"/>
    <property type="match status" value="1"/>
</dbReference>
<dbReference type="Pfam" id="PF00547">
    <property type="entry name" value="Urease_gamma"/>
    <property type="match status" value="1"/>
</dbReference>
<dbReference type="PIRSF" id="PIRSF001223">
    <property type="entry name" value="Urease_gamma"/>
    <property type="match status" value="1"/>
</dbReference>
<dbReference type="SUPFAM" id="SSF54111">
    <property type="entry name" value="Urease, gamma-subunit"/>
    <property type="match status" value="1"/>
</dbReference>
<accession>B1ZP08</accession>
<reference key="1">
    <citation type="journal article" date="2011" name="J. Bacteriol.">
        <title>Genome sequence of the verrucomicrobium Opitutus terrae PB90-1, an abundant inhabitant of rice paddy soil ecosystems.</title>
        <authorList>
            <person name="van Passel M.W."/>
            <person name="Kant R."/>
            <person name="Palva A."/>
            <person name="Copeland A."/>
            <person name="Lucas S."/>
            <person name="Lapidus A."/>
            <person name="Glavina del Rio T."/>
            <person name="Pitluck S."/>
            <person name="Goltsman E."/>
            <person name="Clum A."/>
            <person name="Sun H."/>
            <person name="Schmutz J."/>
            <person name="Larimer F.W."/>
            <person name="Land M.L."/>
            <person name="Hauser L."/>
            <person name="Kyrpides N."/>
            <person name="Mikhailova N."/>
            <person name="Richardson P.P."/>
            <person name="Janssen P.H."/>
            <person name="de Vos W.M."/>
            <person name="Smidt H."/>
        </authorList>
    </citation>
    <scope>NUCLEOTIDE SEQUENCE [LARGE SCALE GENOMIC DNA]</scope>
    <source>
        <strain>DSM 11246 / JCM 15787 / PB90-1</strain>
    </source>
</reference>
<feature type="chain" id="PRO_1000199874" description="Urease subunit gamma">
    <location>
        <begin position="1"/>
        <end position="100"/>
    </location>
</feature>
<proteinExistence type="inferred from homology"/>
<organism>
    <name type="scientific">Opitutus terrae (strain DSM 11246 / JCM 15787 / PB90-1)</name>
    <dbReference type="NCBI Taxonomy" id="452637"/>
    <lineage>
        <taxon>Bacteria</taxon>
        <taxon>Pseudomonadati</taxon>
        <taxon>Verrucomicrobiota</taxon>
        <taxon>Opitutia</taxon>
        <taxon>Opitutales</taxon>
        <taxon>Opitutaceae</taxon>
        <taxon>Opitutus</taxon>
    </lineage>
</organism>
<gene>
    <name evidence="1" type="primary">ureA</name>
    <name type="ordered locus">Oter_4224</name>
</gene>
<name>URE3_OPITP</name>